<accession>Q9LMS5</accession>
<accession>Q9LM36</accession>
<organism>
    <name type="scientific">Arabidopsis thaliana</name>
    <name type="common">Mouse-ear cress</name>
    <dbReference type="NCBI Taxonomy" id="3702"/>
    <lineage>
        <taxon>Eukaryota</taxon>
        <taxon>Viridiplantae</taxon>
        <taxon>Streptophyta</taxon>
        <taxon>Embryophyta</taxon>
        <taxon>Tracheophyta</taxon>
        <taxon>Spermatophyta</taxon>
        <taxon>Magnoliopsida</taxon>
        <taxon>eudicotyledons</taxon>
        <taxon>Gunneridae</taxon>
        <taxon>Pentapetalae</taxon>
        <taxon>rosids</taxon>
        <taxon>malvids</taxon>
        <taxon>Brassicales</taxon>
        <taxon>Brassicaceae</taxon>
        <taxon>Camelineae</taxon>
        <taxon>Arabidopsis</taxon>
    </lineage>
</organism>
<proteinExistence type="inferred from homology"/>
<feature type="signal peptide" evidence="2">
    <location>
        <begin position="1"/>
        <end position="49"/>
    </location>
</feature>
<feature type="chain" id="PRO_0000367345" description="GDSL esterase/lipase At1g18120">
    <location>
        <begin position="50"/>
        <end position="256"/>
    </location>
</feature>
<feature type="active site" description="Nucleophile" evidence="1">
    <location>
        <position position="67"/>
    </location>
</feature>
<feature type="glycosylation site" description="N-linked (GlcNAc...) asparagine" evidence="2">
    <location>
        <position position="181"/>
    </location>
</feature>
<sequence length="256" mass="28969">MYRVYKNNKFILISIPRITNKLWQKNCNLVILLGVLLVLTLFHDPIIVAALGGESNPAVGLFTFGDSYFDGGNKMFNFFWPYGKSRDDPNGKFSDGRIVPDFIAEFMGIPEEIPPVFKTAVDVLRGASFGVADASILGYPATSMTLNQQVDNFRSMKSNWIDDFIGRSLFMIYIGTEDKLNFTKNKPNALLHSLKASKFAIQLLARWVAYQYRDKNTRQGNECYEPLNDLVKQHNEKIGPMLNDLAKTNPGRTSQH</sequence>
<keyword id="KW-0325">Glycoprotein</keyword>
<keyword id="KW-0378">Hydrolase</keyword>
<keyword id="KW-0442">Lipid degradation</keyword>
<keyword id="KW-0443">Lipid metabolism</keyword>
<keyword id="KW-1185">Reference proteome</keyword>
<keyword id="KW-0964">Secreted</keyword>
<keyword id="KW-0732">Signal</keyword>
<evidence type="ECO:0000250" key="1"/>
<evidence type="ECO:0000255" key="2"/>
<evidence type="ECO:0000305" key="3"/>
<protein>
    <recommendedName>
        <fullName>GDSL esterase/lipase At1g18120</fullName>
        <ecNumber>3.1.1.-</ecNumber>
    </recommendedName>
    <alternativeName>
        <fullName>Extracellular lipase At1g18120</fullName>
    </alternativeName>
</protein>
<dbReference type="EC" id="3.1.1.-"/>
<dbReference type="EMBL" id="AC034107">
    <property type="protein sequence ID" value="AAF97828.1"/>
    <property type="molecule type" value="Genomic_DNA"/>
</dbReference>
<dbReference type="EMBL" id="AC069551">
    <property type="protein sequence ID" value="AAF78371.1"/>
    <property type="status" value="ALT_SEQ"/>
    <property type="molecule type" value="Genomic_DNA"/>
</dbReference>
<dbReference type="EMBL" id="CP002684">
    <property type="status" value="NOT_ANNOTATED_CDS"/>
    <property type="molecule type" value="Genomic_DNA"/>
</dbReference>
<dbReference type="PIR" id="D86316">
    <property type="entry name" value="D86316"/>
</dbReference>
<dbReference type="FunCoup" id="Q9LMS5">
    <property type="interactions" value="7"/>
</dbReference>
<dbReference type="GlyGen" id="Q9LMS5">
    <property type="glycosylation" value="1 site"/>
</dbReference>
<dbReference type="PeptideAtlas" id="Q9LMS5"/>
<dbReference type="Araport" id="AT1G18120"/>
<dbReference type="TAIR" id="AT1G18120"/>
<dbReference type="InParanoid" id="Q9LMS5"/>
<dbReference type="PRO" id="PR:Q9LMS5"/>
<dbReference type="Proteomes" id="UP000006548">
    <property type="component" value="Chromosome 1"/>
</dbReference>
<dbReference type="ExpressionAtlas" id="Q9LMS5">
    <property type="expression patterns" value="baseline and differential"/>
</dbReference>
<dbReference type="GO" id="GO:0005576">
    <property type="term" value="C:extracellular region"/>
    <property type="evidence" value="ECO:0007669"/>
    <property type="project" value="UniProtKB-SubCell"/>
</dbReference>
<dbReference type="GO" id="GO:0016788">
    <property type="term" value="F:hydrolase activity, acting on ester bonds"/>
    <property type="evidence" value="ECO:0007669"/>
    <property type="project" value="InterPro"/>
</dbReference>
<dbReference type="GO" id="GO:0016042">
    <property type="term" value="P:lipid catabolic process"/>
    <property type="evidence" value="ECO:0007669"/>
    <property type="project" value="UniProtKB-KW"/>
</dbReference>
<dbReference type="Gene3D" id="3.40.50.1110">
    <property type="entry name" value="SGNH hydrolase"/>
    <property type="match status" value="1"/>
</dbReference>
<dbReference type="InterPro" id="IPR001087">
    <property type="entry name" value="GDSL"/>
</dbReference>
<dbReference type="InterPro" id="IPR051058">
    <property type="entry name" value="GDSL_Est/Lipase"/>
</dbReference>
<dbReference type="InterPro" id="IPR036514">
    <property type="entry name" value="SGNH_hydro_sf"/>
</dbReference>
<dbReference type="PANTHER" id="PTHR45648:SF117">
    <property type="entry name" value="GDSL ESTERASE_LIPASE ESM1"/>
    <property type="match status" value="1"/>
</dbReference>
<dbReference type="PANTHER" id="PTHR45648">
    <property type="entry name" value="GDSL LIPASE/ACYLHYDROLASE FAMILY PROTEIN (AFU_ORTHOLOGUE AFUA_4G14700)"/>
    <property type="match status" value="1"/>
</dbReference>
<dbReference type="Pfam" id="PF00657">
    <property type="entry name" value="Lipase_GDSL"/>
    <property type="match status" value="1"/>
</dbReference>
<name>GDL3_ARATH</name>
<reference key="1">
    <citation type="journal article" date="2000" name="Nature">
        <title>Sequence and analysis of chromosome 1 of the plant Arabidopsis thaliana.</title>
        <authorList>
            <person name="Theologis A."/>
            <person name="Ecker J.R."/>
            <person name="Palm C.J."/>
            <person name="Federspiel N.A."/>
            <person name="Kaul S."/>
            <person name="White O."/>
            <person name="Alonso J."/>
            <person name="Altafi H."/>
            <person name="Araujo R."/>
            <person name="Bowman C.L."/>
            <person name="Brooks S.Y."/>
            <person name="Buehler E."/>
            <person name="Chan A."/>
            <person name="Chao Q."/>
            <person name="Chen H."/>
            <person name="Cheuk R.F."/>
            <person name="Chin C.W."/>
            <person name="Chung M.K."/>
            <person name="Conn L."/>
            <person name="Conway A.B."/>
            <person name="Conway A.R."/>
            <person name="Creasy T.H."/>
            <person name="Dewar K."/>
            <person name="Dunn P."/>
            <person name="Etgu P."/>
            <person name="Feldblyum T.V."/>
            <person name="Feng J.-D."/>
            <person name="Fong B."/>
            <person name="Fujii C.Y."/>
            <person name="Gill J.E."/>
            <person name="Goldsmith A.D."/>
            <person name="Haas B."/>
            <person name="Hansen N.F."/>
            <person name="Hughes B."/>
            <person name="Huizar L."/>
            <person name="Hunter J.L."/>
            <person name="Jenkins J."/>
            <person name="Johnson-Hopson C."/>
            <person name="Khan S."/>
            <person name="Khaykin E."/>
            <person name="Kim C.J."/>
            <person name="Koo H.L."/>
            <person name="Kremenetskaia I."/>
            <person name="Kurtz D.B."/>
            <person name="Kwan A."/>
            <person name="Lam B."/>
            <person name="Langin-Hooper S."/>
            <person name="Lee A."/>
            <person name="Lee J.M."/>
            <person name="Lenz C.A."/>
            <person name="Li J.H."/>
            <person name="Li Y.-P."/>
            <person name="Lin X."/>
            <person name="Liu S.X."/>
            <person name="Liu Z.A."/>
            <person name="Luros J.S."/>
            <person name="Maiti R."/>
            <person name="Marziali A."/>
            <person name="Militscher J."/>
            <person name="Miranda M."/>
            <person name="Nguyen M."/>
            <person name="Nierman W.C."/>
            <person name="Osborne B.I."/>
            <person name="Pai G."/>
            <person name="Peterson J."/>
            <person name="Pham P.K."/>
            <person name="Rizzo M."/>
            <person name="Rooney T."/>
            <person name="Rowley D."/>
            <person name="Sakano H."/>
            <person name="Salzberg S.L."/>
            <person name="Schwartz J.R."/>
            <person name="Shinn P."/>
            <person name="Southwick A.M."/>
            <person name="Sun H."/>
            <person name="Tallon L.J."/>
            <person name="Tambunga G."/>
            <person name="Toriumi M.J."/>
            <person name="Town C.D."/>
            <person name="Utterback T."/>
            <person name="Van Aken S."/>
            <person name="Vaysberg M."/>
            <person name="Vysotskaia V.S."/>
            <person name="Walker M."/>
            <person name="Wu D."/>
            <person name="Yu G."/>
            <person name="Fraser C.M."/>
            <person name="Venter J.C."/>
            <person name="Davis R.W."/>
        </authorList>
    </citation>
    <scope>NUCLEOTIDE SEQUENCE [LARGE SCALE GENOMIC DNA]</scope>
    <source>
        <strain>cv. Columbia</strain>
    </source>
</reference>
<reference key="2">
    <citation type="journal article" date="2017" name="Plant J.">
        <title>Araport11: a complete reannotation of the Arabidopsis thaliana reference genome.</title>
        <authorList>
            <person name="Cheng C.Y."/>
            <person name="Krishnakumar V."/>
            <person name="Chan A.P."/>
            <person name="Thibaud-Nissen F."/>
            <person name="Schobel S."/>
            <person name="Town C.D."/>
        </authorList>
    </citation>
    <scope>GENOME REANNOTATION</scope>
    <source>
        <strain>cv. Columbia</strain>
    </source>
</reference>
<reference key="3">
    <citation type="journal article" date="2004" name="Prog. Lipid Res.">
        <title>GDSL family of serine esterases/lipases.</title>
        <authorList>
            <person name="Akoh C.C."/>
            <person name="Lee G.-C."/>
            <person name="Liaw Y.-C."/>
            <person name="Huang T.-H."/>
            <person name="Shaw J.-F."/>
        </authorList>
    </citation>
    <scope>REVIEW</scope>
</reference>
<reference key="4">
    <citation type="journal article" date="2008" name="Pak. J. Biol. Sci.">
        <title>Sequence analysis of GDSL lipase gene family in Arabidopsis thaliana.</title>
        <authorList>
            <person name="Ling H."/>
        </authorList>
    </citation>
    <scope>GENE FAMILY</scope>
</reference>
<comment type="subcellular location">
    <subcellularLocation>
        <location evidence="3">Secreted</location>
    </subcellularLocation>
</comment>
<comment type="similarity">
    <text evidence="3">Belongs to the 'GDSL' lipolytic enzyme family.</text>
</comment>
<comment type="sequence caution" evidence="3">
    <conflict type="erroneous gene model prediction">
        <sequence resource="EMBL-CDS" id="AAF78371"/>
    </conflict>
</comment>
<gene>
    <name type="ordered locus">At1g18120</name>
    <name type="ORF">T10F20.12</name>
</gene>